<keyword id="KW-0963">Cytoplasm</keyword>
<keyword id="KW-0489">Methyltransferase</keyword>
<keyword id="KW-0545">Nucleotide biosynthesis</keyword>
<keyword id="KW-1185">Reference proteome</keyword>
<keyword id="KW-0808">Transferase</keyword>
<evidence type="ECO:0000255" key="1">
    <source>
        <dbReference type="HAMAP-Rule" id="MF_00008"/>
    </source>
</evidence>
<protein>
    <recommendedName>
        <fullName evidence="1">Thymidylate synthase</fullName>
        <shortName evidence="1">TS</shortName>
        <shortName evidence="1">TSase</shortName>
        <ecNumber evidence="1">2.1.1.45</ecNumber>
    </recommendedName>
</protein>
<organism>
    <name type="scientific">Listeria monocytogenes serovar 1/2a (strain ATCC BAA-679 / EGD-e)</name>
    <dbReference type="NCBI Taxonomy" id="169963"/>
    <lineage>
        <taxon>Bacteria</taxon>
        <taxon>Bacillati</taxon>
        <taxon>Bacillota</taxon>
        <taxon>Bacilli</taxon>
        <taxon>Bacillales</taxon>
        <taxon>Listeriaceae</taxon>
        <taxon>Listeria</taxon>
    </lineage>
</organism>
<sequence>MKQYLDLEKYVLENGTQKGDRTGTGTISTFGYQMRFDLQEGFPIMTTKRVPFKLVVSELLWFLHGDTNIRYLLQHNNNIWNEWAFERFVKSDDYKGEDMTDFGLRAERDPAFKEVYQAEMEKFKTRIIEDEAFATKYGELGNIYGKQWREWKTSQGETIDQLADLIEMIKTNPNSRRLIVSAWNPEDIPNMALPPCHSLFQFYVADGKLSCQLYQRSADIFLGVPFNIASYALLTHLIAREVGLDVGEFIHTMGDAHLYNNHIEQVKEQLSRTPHALPKLVLSDKPATIFDFEVADISLDGYNPDPSIKAPISV</sequence>
<reference key="1">
    <citation type="journal article" date="2001" name="Science">
        <title>Comparative genomics of Listeria species.</title>
        <authorList>
            <person name="Glaser P."/>
            <person name="Frangeul L."/>
            <person name="Buchrieser C."/>
            <person name="Rusniok C."/>
            <person name="Amend A."/>
            <person name="Baquero F."/>
            <person name="Berche P."/>
            <person name="Bloecker H."/>
            <person name="Brandt P."/>
            <person name="Chakraborty T."/>
            <person name="Charbit A."/>
            <person name="Chetouani F."/>
            <person name="Couve E."/>
            <person name="de Daruvar A."/>
            <person name="Dehoux P."/>
            <person name="Domann E."/>
            <person name="Dominguez-Bernal G."/>
            <person name="Duchaud E."/>
            <person name="Durant L."/>
            <person name="Dussurget O."/>
            <person name="Entian K.-D."/>
            <person name="Fsihi H."/>
            <person name="Garcia-del Portillo F."/>
            <person name="Garrido P."/>
            <person name="Gautier L."/>
            <person name="Goebel W."/>
            <person name="Gomez-Lopez N."/>
            <person name="Hain T."/>
            <person name="Hauf J."/>
            <person name="Jackson D."/>
            <person name="Jones L.-M."/>
            <person name="Kaerst U."/>
            <person name="Kreft J."/>
            <person name="Kuhn M."/>
            <person name="Kunst F."/>
            <person name="Kurapkat G."/>
            <person name="Madueno E."/>
            <person name="Maitournam A."/>
            <person name="Mata Vicente J."/>
            <person name="Ng E."/>
            <person name="Nedjari H."/>
            <person name="Nordsiek G."/>
            <person name="Novella S."/>
            <person name="de Pablos B."/>
            <person name="Perez-Diaz J.-C."/>
            <person name="Purcell R."/>
            <person name="Remmel B."/>
            <person name="Rose M."/>
            <person name="Schlueter T."/>
            <person name="Simoes N."/>
            <person name="Tierrez A."/>
            <person name="Vazquez-Boland J.-A."/>
            <person name="Voss H."/>
            <person name="Wehland J."/>
            <person name="Cossart P."/>
        </authorList>
    </citation>
    <scope>NUCLEOTIDE SEQUENCE [LARGE SCALE GENOMIC DNA]</scope>
    <source>
        <strain>ATCC BAA-679 / EGD-e</strain>
    </source>
</reference>
<accession>Q8Y626</accession>
<gene>
    <name evidence="1" type="primary">thyA</name>
    <name type="ordered locus">lmo1874</name>
</gene>
<comment type="function">
    <text evidence="1">Catalyzes the reductive methylation of 2'-deoxyuridine-5'-monophosphate (dUMP) to 2'-deoxythymidine-5'-monophosphate (dTMP) while utilizing 5,10-methylenetetrahydrofolate (mTHF) as the methyl donor and reductant in the reaction, yielding dihydrofolate (DHF) as a by-product. This enzymatic reaction provides an intracellular de novo source of dTMP, an essential precursor for DNA biosynthesis.</text>
</comment>
<comment type="catalytic activity">
    <reaction evidence="1">
        <text>dUMP + (6R)-5,10-methylene-5,6,7,8-tetrahydrofolate = 7,8-dihydrofolate + dTMP</text>
        <dbReference type="Rhea" id="RHEA:12104"/>
        <dbReference type="ChEBI" id="CHEBI:15636"/>
        <dbReference type="ChEBI" id="CHEBI:57451"/>
        <dbReference type="ChEBI" id="CHEBI:63528"/>
        <dbReference type="ChEBI" id="CHEBI:246422"/>
        <dbReference type="EC" id="2.1.1.45"/>
    </reaction>
</comment>
<comment type="pathway">
    <text evidence="1">Pyrimidine metabolism; dTTP biosynthesis.</text>
</comment>
<comment type="subunit">
    <text evidence="1">Homodimer.</text>
</comment>
<comment type="subcellular location">
    <subcellularLocation>
        <location evidence="1">Cytoplasm</location>
    </subcellularLocation>
</comment>
<comment type="similarity">
    <text evidence="1">Belongs to the thymidylate synthase family. Bacterial-type ThyA subfamily.</text>
</comment>
<name>TYSY_LISMO</name>
<proteinExistence type="inferred from homology"/>
<dbReference type="EC" id="2.1.1.45" evidence="1"/>
<dbReference type="EMBL" id="AL591981">
    <property type="protein sequence ID" value="CAC99952.1"/>
    <property type="molecule type" value="Genomic_DNA"/>
</dbReference>
<dbReference type="PIR" id="AB1309">
    <property type="entry name" value="AB1309"/>
</dbReference>
<dbReference type="RefSeq" id="NP_465399.1">
    <property type="nucleotide sequence ID" value="NC_003210.1"/>
</dbReference>
<dbReference type="RefSeq" id="WP_010989834.1">
    <property type="nucleotide sequence ID" value="NZ_CP149495.1"/>
</dbReference>
<dbReference type="SMR" id="Q8Y626"/>
<dbReference type="STRING" id="169963.gene:17594559"/>
<dbReference type="PaxDb" id="169963-lmo1874"/>
<dbReference type="EnsemblBacteria" id="CAC99952">
    <property type="protein sequence ID" value="CAC99952"/>
    <property type="gene ID" value="CAC99952"/>
</dbReference>
<dbReference type="GeneID" id="985817"/>
<dbReference type="KEGG" id="lmo:lmo1874"/>
<dbReference type="PATRIC" id="fig|169963.11.peg.1919"/>
<dbReference type="eggNOG" id="COG0207">
    <property type="taxonomic scope" value="Bacteria"/>
</dbReference>
<dbReference type="HOGENOM" id="CLU_021669_0_0_9"/>
<dbReference type="OrthoDB" id="9774633at2"/>
<dbReference type="PhylomeDB" id="Q8Y626"/>
<dbReference type="BioCyc" id="LMON169963:LMO1874-MONOMER"/>
<dbReference type="UniPathway" id="UPA00575"/>
<dbReference type="Proteomes" id="UP000000817">
    <property type="component" value="Chromosome"/>
</dbReference>
<dbReference type="GO" id="GO:0005829">
    <property type="term" value="C:cytosol"/>
    <property type="evidence" value="ECO:0000318"/>
    <property type="project" value="GO_Central"/>
</dbReference>
<dbReference type="GO" id="GO:0004799">
    <property type="term" value="F:thymidylate synthase activity"/>
    <property type="evidence" value="ECO:0000318"/>
    <property type="project" value="GO_Central"/>
</dbReference>
<dbReference type="GO" id="GO:0006231">
    <property type="term" value="P:dTMP biosynthetic process"/>
    <property type="evidence" value="ECO:0000318"/>
    <property type="project" value="GO_Central"/>
</dbReference>
<dbReference type="GO" id="GO:0006235">
    <property type="term" value="P:dTTP biosynthetic process"/>
    <property type="evidence" value="ECO:0007669"/>
    <property type="project" value="UniProtKB-UniRule"/>
</dbReference>
<dbReference type="GO" id="GO:0032259">
    <property type="term" value="P:methylation"/>
    <property type="evidence" value="ECO:0007669"/>
    <property type="project" value="UniProtKB-KW"/>
</dbReference>
<dbReference type="CDD" id="cd00351">
    <property type="entry name" value="TS_Pyrimidine_HMase"/>
    <property type="match status" value="1"/>
</dbReference>
<dbReference type="Gene3D" id="3.30.572.10">
    <property type="entry name" value="Thymidylate synthase/dCMP hydroxymethylase domain"/>
    <property type="match status" value="1"/>
</dbReference>
<dbReference type="HAMAP" id="MF_00008">
    <property type="entry name" value="Thymidy_synth_bact"/>
    <property type="match status" value="1"/>
</dbReference>
<dbReference type="InterPro" id="IPR045097">
    <property type="entry name" value="Thymidate_synth/dCMP_Mease"/>
</dbReference>
<dbReference type="InterPro" id="IPR023451">
    <property type="entry name" value="Thymidate_synth/dCMP_Mease_dom"/>
</dbReference>
<dbReference type="InterPro" id="IPR036926">
    <property type="entry name" value="Thymidate_synth/dCMP_Mease_sf"/>
</dbReference>
<dbReference type="InterPro" id="IPR000398">
    <property type="entry name" value="Thymidylate_synthase"/>
</dbReference>
<dbReference type="InterPro" id="IPR020940">
    <property type="entry name" value="Thymidylate_synthase_AS"/>
</dbReference>
<dbReference type="NCBIfam" id="NF002496">
    <property type="entry name" value="PRK01827.1-2"/>
    <property type="match status" value="1"/>
</dbReference>
<dbReference type="NCBIfam" id="TIGR03284">
    <property type="entry name" value="thym_sym"/>
    <property type="match status" value="1"/>
</dbReference>
<dbReference type="PANTHER" id="PTHR11548:SF9">
    <property type="entry name" value="THYMIDYLATE SYNTHASE"/>
    <property type="match status" value="1"/>
</dbReference>
<dbReference type="PANTHER" id="PTHR11548">
    <property type="entry name" value="THYMIDYLATE SYNTHASE 1"/>
    <property type="match status" value="1"/>
</dbReference>
<dbReference type="Pfam" id="PF00303">
    <property type="entry name" value="Thymidylat_synt"/>
    <property type="match status" value="1"/>
</dbReference>
<dbReference type="PRINTS" id="PR00108">
    <property type="entry name" value="THYMDSNTHASE"/>
</dbReference>
<dbReference type="SUPFAM" id="SSF55831">
    <property type="entry name" value="Thymidylate synthase/dCMP hydroxymethylase"/>
    <property type="match status" value="1"/>
</dbReference>
<dbReference type="PROSITE" id="PS00091">
    <property type="entry name" value="THYMIDYLATE_SYNTHASE"/>
    <property type="match status" value="1"/>
</dbReference>
<feature type="chain" id="PRO_0000140977" description="Thymidylate synthase">
    <location>
        <begin position="1"/>
        <end position="314"/>
    </location>
</feature>
<feature type="active site" description="Nucleophile" evidence="1">
    <location>
        <position position="196"/>
    </location>
</feature>
<feature type="binding site" description="in other chain" evidence="1">
    <location>
        <position position="21"/>
    </location>
    <ligand>
        <name>dUMP</name>
        <dbReference type="ChEBI" id="CHEBI:246422"/>
        <note>ligand shared between dimeric partners</note>
    </ligand>
</feature>
<feature type="binding site" evidence="1">
    <location>
        <begin position="176"/>
        <end position="177"/>
    </location>
    <ligand>
        <name>dUMP</name>
        <dbReference type="ChEBI" id="CHEBI:246422"/>
        <note>ligand shared between dimeric partners</note>
    </ligand>
</feature>
<feature type="binding site" description="in other chain" evidence="1">
    <location>
        <begin position="216"/>
        <end position="219"/>
    </location>
    <ligand>
        <name>dUMP</name>
        <dbReference type="ChEBI" id="CHEBI:246422"/>
        <note>ligand shared between dimeric partners</note>
    </ligand>
</feature>
<feature type="binding site" evidence="1">
    <location>
        <position position="219"/>
    </location>
    <ligand>
        <name>(6R)-5,10-methylene-5,6,7,8-tetrahydrofolate</name>
        <dbReference type="ChEBI" id="CHEBI:15636"/>
    </ligand>
</feature>
<feature type="binding site" description="in other chain" evidence="1">
    <location>
        <position position="227"/>
    </location>
    <ligand>
        <name>dUMP</name>
        <dbReference type="ChEBI" id="CHEBI:246422"/>
        <note>ligand shared between dimeric partners</note>
    </ligand>
</feature>
<feature type="binding site" description="in other chain" evidence="1">
    <location>
        <begin position="257"/>
        <end position="259"/>
    </location>
    <ligand>
        <name>dUMP</name>
        <dbReference type="ChEBI" id="CHEBI:246422"/>
        <note>ligand shared between dimeric partners</note>
    </ligand>
</feature>
<feature type="binding site" evidence="1">
    <location>
        <position position="313"/>
    </location>
    <ligand>
        <name>(6R)-5,10-methylene-5,6,7,8-tetrahydrofolate</name>
        <dbReference type="ChEBI" id="CHEBI:15636"/>
    </ligand>
</feature>